<evidence type="ECO:0000250" key="1">
    <source>
        <dbReference type="UniProtKB" id="P04798"/>
    </source>
</evidence>
<evidence type="ECO:0000255" key="2"/>
<evidence type="ECO:0000269" key="3">
    <source>
    </source>
</evidence>
<evidence type="ECO:0000303" key="4">
    <source>
    </source>
</evidence>
<evidence type="ECO:0000305" key="5"/>
<gene>
    <name type="primary">grgG</name>
</gene>
<protein>
    <recommendedName>
        <fullName evidence="4">Cytochrome P450 monooxygenase grgG</fullName>
        <ecNumber evidence="3">1.-.-.-</ecNumber>
    </recommendedName>
    <alternativeName>
        <fullName evidence="4">Gregatin A biosynthesis cluster protein G</fullName>
    </alternativeName>
</protein>
<comment type="function">
    <text evidence="3">Cytochrome P450 monooxygenase; part of the gene cluster that mediates the biosynthesis of gregatin A, a fungal polyketide featuring an alkylated furanone core (PubMed:32275405). The PKS grgA synthesizes C11 and C4 polyketide chains in the presence and absence of the trans-enoyl reductase grgB, respectively (PubMed:32275405). The polyketide transferase grgF is then responsible for the fusion of the two carbon chains to produce the furanone skeleton of gregatin A (PubMed:32275405). Next, the cytochrome P450 monooxygenase grgG performs the oxidative cyclization to furnish the gregatin scaffold and leads to the formation of desmethylgregatin A. In this transformation, grgG initially abstracts a hydrogen atom from C-8 to generate a substrate radical, from which one electron is transferred to the iron-heme center to yield a carbocationic species. Heterocyclization along with double-bond isomerizations provides desmethylgregatin A with the furanone ring. Alternatively, grgG might provide hydroxylation at the C-8 radical, which is followed by dehydration to give the cyclized desmethylgregatin A (PubMed:32275405). Finally, the O-methyltransferase grgD methylates the carboxyl group of desmethylgregatin A to provide gregatin A (PubMed:32275405).</text>
</comment>
<comment type="cofactor">
    <cofactor evidence="1">
        <name>heme</name>
        <dbReference type="ChEBI" id="CHEBI:30413"/>
    </cofactor>
</comment>
<comment type="pathway">
    <text evidence="3">Secondary metabolite biosynthesis.</text>
</comment>
<comment type="subcellular location">
    <subcellularLocation>
        <location evidence="2">Membrane</location>
        <topology evidence="2">Single-pass membrane protein</topology>
    </subcellularLocation>
</comment>
<comment type="similarity">
    <text evidence="5">Belongs to the cytochrome P450 family.</text>
</comment>
<sequence>MTGFAEIIISPASFIYFPLLILVGHALIFILNTLRPKAFPPGPRGLPGLGNLLQVDRIFPFLTYGKWAKDYGSDTPLGVKKGATNVVVLNSSRLVRELFEKRGAVYSDRPWQFMNNTWIFKDDLKAAIFQNSSPWLTSWRRDFNKNFGPAAITRLRPIYEAETARLLVKLLEAPTASGKDLEAILVCWMMSVPCLGVCGRRPDSMGDHGFEIKQFRHCSDEYATLVAPNAGDLFPFLRYLPEFFGMAEWKERARAVREAVLNTGTQFLSAAREQRAALDEGKSIAWESVLAKMLREQREKNDDMFTVTDMGNTAFHIVSAATNTSLAVFSIMLLILAKDPQLQQRVRNEVLEVSGGATPTATDLSSLKYTEAFWNEVHRWRPVAPQGVAHAPSQDDIYNGHRIPKGTAIIMNVWNIHHSEEDYDEPEEFIPERFLQHPLGLRSDHTLDAAHLEASASRVTWDFGAGRRICPGMHSAKHSLLLGLAKVLWAFDILPPEGKEIDLSLETGFVQEIALHPKELNVVLKLRDGRTKQDLMDHYSQTYAAEAEVMGWKDGLYQ</sequence>
<name>GRGG_PENSQ</name>
<organism>
    <name type="scientific">Penicillium sp</name>
    <dbReference type="NCBI Taxonomy" id="5081"/>
    <lineage>
        <taxon>Eukaryota</taxon>
        <taxon>Fungi</taxon>
        <taxon>Dikarya</taxon>
        <taxon>Ascomycota</taxon>
        <taxon>Pezizomycotina</taxon>
        <taxon>Eurotiomycetes</taxon>
        <taxon>Eurotiomycetidae</taxon>
        <taxon>Eurotiales</taxon>
        <taxon>Aspergillaceae</taxon>
        <taxon>Penicillium</taxon>
    </lineage>
</organism>
<dbReference type="EC" id="1.-.-.-" evidence="3"/>
<dbReference type="EMBL" id="LC522971">
    <property type="protein sequence ID" value="BCA42574.1"/>
    <property type="molecule type" value="Genomic_DNA"/>
</dbReference>
<dbReference type="SMR" id="A0A6F8RP03"/>
<dbReference type="GO" id="GO:0016020">
    <property type="term" value="C:membrane"/>
    <property type="evidence" value="ECO:0007669"/>
    <property type="project" value="UniProtKB-SubCell"/>
</dbReference>
<dbReference type="GO" id="GO:0020037">
    <property type="term" value="F:heme binding"/>
    <property type="evidence" value="ECO:0007669"/>
    <property type="project" value="InterPro"/>
</dbReference>
<dbReference type="GO" id="GO:0005506">
    <property type="term" value="F:iron ion binding"/>
    <property type="evidence" value="ECO:0007669"/>
    <property type="project" value="InterPro"/>
</dbReference>
<dbReference type="GO" id="GO:0004497">
    <property type="term" value="F:monooxygenase activity"/>
    <property type="evidence" value="ECO:0007669"/>
    <property type="project" value="UniProtKB-KW"/>
</dbReference>
<dbReference type="GO" id="GO:0016705">
    <property type="term" value="F:oxidoreductase activity, acting on paired donors, with incorporation or reduction of molecular oxygen"/>
    <property type="evidence" value="ECO:0007669"/>
    <property type="project" value="InterPro"/>
</dbReference>
<dbReference type="GO" id="GO:0043386">
    <property type="term" value="P:mycotoxin biosynthetic process"/>
    <property type="evidence" value="ECO:0007669"/>
    <property type="project" value="UniProtKB-ARBA"/>
</dbReference>
<dbReference type="Gene3D" id="1.10.630.10">
    <property type="entry name" value="Cytochrome P450"/>
    <property type="match status" value="1"/>
</dbReference>
<dbReference type="InterPro" id="IPR001128">
    <property type="entry name" value="Cyt_P450"/>
</dbReference>
<dbReference type="InterPro" id="IPR017972">
    <property type="entry name" value="Cyt_P450_CS"/>
</dbReference>
<dbReference type="InterPro" id="IPR002401">
    <property type="entry name" value="Cyt_P450_E_grp-I"/>
</dbReference>
<dbReference type="InterPro" id="IPR036396">
    <property type="entry name" value="Cyt_P450_sf"/>
</dbReference>
<dbReference type="InterPro" id="IPR050364">
    <property type="entry name" value="Cytochrome_P450_fung"/>
</dbReference>
<dbReference type="PANTHER" id="PTHR46300:SF2">
    <property type="entry name" value="CYTOCHROME P450 MONOOXYGENASE ALNH-RELATED"/>
    <property type="match status" value="1"/>
</dbReference>
<dbReference type="PANTHER" id="PTHR46300">
    <property type="entry name" value="P450, PUTATIVE (EUROFUNG)-RELATED-RELATED"/>
    <property type="match status" value="1"/>
</dbReference>
<dbReference type="Pfam" id="PF00067">
    <property type="entry name" value="p450"/>
    <property type="match status" value="1"/>
</dbReference>
<dbReference type="PRINTS" id="PR00463">
    <property type="entry name" value="EP450I"/>
</dbReference>
<dbReference type="SUPFAM" id="SSF48264">
    <property type="entry name" value="Cytochrome P450"/>
    <property type="match status" value="1"/>
</dbReference>
<dbReference type="PROSITE" id="PS00086">
    <property type="entry name" value="CYTOCHROME_P450"/>
    <property type="match status" value="1"/>
</dbReference>
<accession>A0A6F8RP03</accession>
<feature type="chain" id="PRO_0000457337" description="Cytochrome P450 monooxygenase grgG">
    <location>
        <begin position="1"/>
        <end position="558"/>
    </location>
</feature>
<feature type="transmembrane region" description="Helical" evidence="2">
    <location>
        <begin position="11"/>
        <end position="31"/>
    </location>
</feature>
<feature type="binding site" description="axial binding residue" evidence="1">
    <location>
        <position position="470"/>
    </location>
    <ligand>
        <name>heme</name>
        <dbReference type="ChEBI" id="CHEBI:30413"/>
    </ligand>
    <ligandPart>
        <name>Fe</name>
        <dbReference type="ChEBI" id="CHEBI:18248"/>
    </ligandPart>
</feature>
<reference key="1">
    <citation type="journal article" date="2020" name="J. Am. Chem. Soc.">
        <title>Molecular basis for the biosynthesis of an unusual chain-fused polyketide gregatin A.</title>
        <authorList>
            <person name="Wang W.G."/>
            <person name="Wang H."/>
            <person name="Du L.Q."/>
            <person name="Li M."/>
            <person name="Chen L."/>
            <person name="Yu J."/>
            <person name="Cheng G.G."/>
            <person name="Zhan M.T."/>
            <person name="Hu Q.F."/>
            <person name="Zhang L."/>
            <person name="Yao M."/>
            <person name="Matsuda Y."/>
        </authorList>
    </citation>
    <scope>NUCLEOTIDE SEQUENCE [GENOMIC DNA]</scope>
    <scope>FUNCTION</scope>
    <scope>CATALYTIC ACTIVITY</scope>
    <scope>PATHWAY</scope>
    <source>
        <strain>Sh18</strain>
    </source>
</reference>
<proteinExistence type="evidence at protein level"/>
<keyword id="KW-0349">Heme</keyword>
<keyword id="KW-0408">Iron</keyword>
<keyword id="KW-0472">Membrane</keyword>
<keyword id="KW-0479">Metal-binding</keyword>
<keyword id="KW-0503">Monooxygenase</keyword>
<keyword id="KW-0560">Oxidoreductase</keyword>
<keyword id="KW-0812">Transmembrane</keyword>
<keyword id="KW-1133">Transmembrane helix</keyword>